<reference key="1">
    <citation type="journal article" date="2006" name="Genome Res.">
        <title>Skewed genomic variability in strains of the toxigenic bacterial pathogen, Clostridium perfringens.</title>
        <authorList>
            <person name="Myers G.S.A."/>
            <person name="Rasko D.A."/>
            <person name="Cheung J.K."/>
            <person name="Ravel J."/>
            <person name="Seshadri R."/>
            <person name="DeBoy R.T."/>
            <person name="Ren Q."/>
            <person name="Varga J."/>
            <person name="Awad M.M."/>
            <person name="Brinkac L.M."/>
            <person name="Daugherty S.C."/>
            <person name="Haft D.H."/>
            <person name="Dodson R.J."/>
            <person name="Madupu R."/>
            <person name="Nelson W.C."/>
            <person name="Rosovitz M.J."/>
            <person name="Sullivan S.A."/>
            <person name="Khouri H."/>
            <person name="Dimitrov G.I."/>
            <person name="Watkins K.L."/>
            <person name="Mulligan S."/>
            <person name="Benton J."/>
            <person name="Radune D."/>
            <person name="Fisher D.J."/>
            <person name="Atkins H.S."/>
            <person name="Hiscox T."/>
            <person name="Jost B.H."/>
            <person name="Billington S.J."/>
            <person name="Songer J.G."/>
            <person name="McClane B.A."/>
            <person name="Titball R.W."/>
            <person name="Rood J.I."/>
            <person name="Melville S.B."/>
            <person name="Paulsen I.T."/>
        </authorList>
    </citation>
    <scope>NUCLEOTIDE SEQUENCE [LARGE SCALE GENOMIC DNA]</scope>
    <source>
        <strain>ATCC 13124 / DSM 756 / JCM 1290 / NCIMB 6125 / NCTC 8237 / S 107 / Type A</strain>
    </source>
</reference>
<comment type="function">
    <text evidence="1">Cleaves the N-terminal amino acid of tripeptides.</text>
</comment>
<comment type="catalytic activity">
    <reaction evidence="1">
        <text>Release of the N-terminal residue from a tripeptide.</text>
        <dbReference type="EC" id="3.4.11.4"/>
    </reaction>
</comment>
<comment type="cofactor">
    <cofactor evidence="1">
        <name>Zn(2+)</name>
        <dbReference type="ChEBI" id="CHEBI:29105"/>
    </cofactor>
    <text evidence="1">Binds 2 Zn(2+) ions per subunit.</text>
</comment>
<comment type="subcellular location">
    <subcellularLocation>
        <location evidence="1">Cytoplasm</location>
    </subcellularLocation>
</comment>
<comment type="similarity">
    <text evidence="1">Belongs to the peptidase M20B family.</text>
</comment>
<proteinExistence type="inferred from homology"/>
<gene>
    <name evidence="1" type="primary">pepT</name>
    <name type="ordered locus">CPF_0029</name>
</gene>
<sequence>MKKVHERFLEYVKVDTKSDETTRVTPSTKGQLELGKILAEELKEIGVDEVRISDKGYVYACLKSNCDKDIPKIGFISHMDTAPDMSGKNVNPKIVENYDGKDIELGNGYTLSPSFSPELPMYKGQTLITTDGTTLLGADDKAGVAEIVTAIEYLINNPEIKHGDIKIGFTPDEEIGEGADHFDVEGFGADFAYTLDGGRIGELEYENFNAASAKVEIIGKNVHPGSAKGKMINSILVAHEFVSMLPLDEVPEKTEGYEGFSFLLDIQGEVEKTSLSFIIRDFDKEGFKNRKERFNEIAKELNKKYGEGTVTVTLKDQYMNMKEMIEPRMHIVETAEKAMKQCGIEPIKNPIRGGTDGARLSFMGLPTPNLFTGGENFHGRYEYISINSMEKAVEVILNIIKIYAEK</sequence>
<evidence type="ECO:0000255" key="1">
    <source>
        <dbReference type="HAMAP-Rule" id="MF_00550"/>
    </source>
</evidence>
<organism>
    <name type="scientific">Clostridium perfringens (strain ATCC 13124 / DSM 756 / JCM 1290 / NCIMB 6125 / NCTC 8237 / Type A)</name>
    <dbReference type="NCBI Taxonomy" id="195103"/>
    <lineage>
        <taxon>Bacteria</taxon>
        <taxon>Bacillati</taxon>
        <taxon>Bacillota</taxon>
        <taxon>Clostridia</taxon>
        <taxon>Eubacteriales</taxon>
        <taxon>Clostridiaceae</taxon>
        <taxon>Clostridium</taxon>
    </lineage>
</organism>
<dbReference type="EC" id="3.4.11.4" evidence="1"/>
<dbReference type="EMBL" id="CP000246">
    <property type="protein sequence ID" value="ABG84056.1"/>
    <property type="molecule type" value="Genomic_DNA"/>
</dbReference>
<dbReference type="RefSeq" id="WP_003474863.1">
    <property type="nucleotide sequence ID" value="NC_008261.1"/>
</dbReference>
<dbReference type="SMR" id="Q0TV42"/>
<dbReference type="STRING" id="195103.CPF_0029"/>
<dbReference type="MEROPS" id="M20.003"/>
<dbReference type="PaxDb" id="195103-CPF_0029"/>
<dbReference type="KEGG" id="cpf:CPF_0029"/>
<dbReference type="eggNOG" id="COG2195">
    <property type="taxonomic scope" value="Bacteria"/>
</dbReference>
<dbReference type="HOGENOM" id="CLU_053676_0_0_9"/>
<dbReference type="Proteomes" id="UP000001823">
    <property type="component" value="Chromosome"/>
</dbReference>
<dbReference type="GO" id="GO:0005829">
    <property type="term" value="C:cytosol"/>
    <property type="evidence" value="ECO:0007669"/>
    <property type="project" value="TreeGrafter"/>
</dbReference>
<dbReference type="GO" id="GO:0008237">
    <property type="term" value="F:metallopeptidase activity"/>
    <property type="evidence" value="ECO:0007669"/>
    <property type="project" value="UniProtKB-KW"/>
</dbReference>
<dbReference type="GO" id="GO:0045148">
    <property type="term" value="F:tripeptide aminopeptidase activity"/>
    <property type="evidence" value="ECO:0007669"/>
    <property type="project" value="UniProtKB-UniRule"/>
</dbReference>
<dbReference type="GO" id="GO:0008270">
    <property type="term" value="F:zinc ion binding"/>
    <property type="evidence" value="ECO:0007669"/>
    <property type="project" value="UniProtKB-UniRule"/>
</dbReference>
<dbReference type="GO" id="GO:0043171">
    <property type="term" value="P:peptide catabolic process"/>
    <property type="evidence" value="ECO:0007669"/>
    <property type="project" value="UniProtKB-UniRule"/>
</dbReference>
<dbReference type="GO" id="GO:0006508">
    <property type="term" value="P:proteolysis"/>
    <property type="evidence" value="ECO:0007669"/>
    <property type="project" value="UniProtKB-UniRule"/>
</dbReference>
<dbReference type="CDD" id="cd03892">
    <property type="entry name" value="M20_peptT"/>
    <property type="match status" value="1"/>
</dbReference>
<dbReference type="FunFam" id="3.30.70.360:FF:000002">
    <property type="entry name" value="Peptidase T"/>
    <property type="match status" value="1"/>
</dbReference>
<dbReference type="Gene3D" id="3.30.70.360">
    <property type="match status" value="1"/>
</dbReference>
<dbReference type="Gene3D" id="3.40.630.10">
    <property type="entry name" value="Zn peptidases"/>
    <property type="match status" value="1"/>
</dbReference>
<dbReference type="HAMAP" id="MF_00550">
    <property type="entry name" value="Aminopeptidase_M20"/>
    <property type="match status" value="1"/>
</dbReference>
<dbReference type="InterPro" id="IPR001261">
    <property type="entry name" value="ArgE/DapE_CS"/>
</dbReference>
<dbReference type="InterPro" id="IPR036264">
    <property type="entry name" value="Bact_exopeptidase_dim_dom"/>
</dbReference>
<dbReference type="InterPro" id="IPR002933">
    <property type="entry name" value="Peptidase_M20"/>
</dbReference>
<dbReference type="InterPro" id="IPR011650">
    <property type="entry name" value="Peptidase_M20_dimer"/>
</dbReference>
<dbReference type="InterPro" id="IPR010161">
    <property type="entry name" value="Peptidase_M20B"/>
</dbReference>
<dbReference type="NCBIfam" id="TIGR01882">
    <property type="entry name" value="peptidase-T"/>
    <property type="match status" value="1"/>
</dbReference>
<dbReference type="NCBIfam" id="NF003976">
    <property type="entry name" value="PRK05469.1"/>
    <property type="match status" value="1"/>
</dbReference>
<dbReference type="NCBIfam" id="NF009920">
    <property type="entry name" value="PRK13381.1"/>
    <property type="match status" value="1"/>
</dbReference>
<dbReference type="PANTHER" id="PTHR42994">
    <property type="entry name" value="PEPTIDASE T"/>
    <property type="match status" value="1"/>
</dbReference>
<dbReference type="PANTHER" id="PTHR42994:SF1">
    <property type="entry name" value="PEPTIDASE T"/>
    <property type="match status" value="1"/>
</dbReference>
<dbReference type="Pfam" id="PF07687">
    <property type="entry name" value="M20_dimer"/>
    <property type="match status" value="1"/>
</dbReference>
<dbReference type="Pfam" id="PF01546">
    <property type="entry name" value="Peptidase_M20"/>
    <property type="match status" value="1"/>
</dbReference>
<dbReference type="PIRSF" id="PIRSF037215">
    <property type="entry name" value="Peptidase_M20B"/>
    <property type="match status" value="1"/>
</dbReference>
<dbReference type="SUPFAM" id="SSF55031">
    <property type="entry name" value="Bacterial exopeptidase dimerisation domain"/>
    <property type="match status" value="1"/>
</dbReference>
<dbReference type="SUPFAM" id="SSF53187">
    <property type="entry name" value="Zn-dependent exopeptidases"/>
    <property type="match status" value="1"/>
</dbReference>
<dbReference type="PROSITE" id="PS00758">
    <property type="entry name" value="ARGE_DAPE_CPG2_1"/>
    <property type="match status" value="1"/>
</dbReference>
<dbReference type="PROSITE" id="PS00759">
    <property type="entry name" value="ARGE_DAPE_CPG2_2"/>
    <property type="match status" value="1"/>
</dbReference>
<keyword id="KW-0031">Aminopeptidase</keyword>
<keyword id="KW-0963">Cytoplasm</keyword>
<keyword id="KW-0378">Hydrolase</keyword>
<keyword id="KW-0479">Metal-binding</keyword>
<keyword id="KW-0482">Metalloprotease</keyword>
<keyword id="KW-0645">Protease</keyword>
<keyword id="KW-0862">Zinc</keyword>
<accession>Q0TV42</accession>
<name>PEPT_CLOP1</name>
<feature type="chain" id="PRO_0000274011" description="Peptidase T">
    <location>
        <begin position="1"/>
        <end position="406"/>
    </location>
</feature>
<feature type="active site" evidence="1">
    <location>
        <position position="80"/>
    </location>
</feature>
<feature type="active site" description="Proton acceptor" evidence="1">
    <location>
        <position position="173"/>
    </location>
</feature>
<feature type="binding site" evidence="1">
    <location>
        <position position="78"/>
    </location>
    <ligand>
        <name>Zn(2+)</name>
        <dbReference type="ChEBI" id="CHEBI:29105"/>
        <label>1</label>
    </ligand>
</feature>
<feature type="binding site" evidence="1">
    <location>
        <position position="139"/>
    </location>
    <ligand>
        <name>Zn(2+)</name>
        <dbReference type="ChEBI" id="CHEBI:29105"/>
        <label>1</label>
    </ligand>
</feature>
<feature type="binding site" evidence="1">
    <location>
        <position position="139"/>
    </location>
    <ligand>
        <name>Zn(2+)</name>
        <dbReference type="ChEBI" id="CHEBI:29105"/>
        <label>2</label>
    </ligand>
</feature>
<feature type="binding site" evidence="1">
    <location>
        <position position="174"/>
    </location>
    <ligand>
        <name>Zn(2+)</name>
        <dbReference type="ChEBI" id="CHEBI:29105"/>
        <label>2</label>
    </ligand>
</feature>
<feature type="binding site" evidence="1">
    <location>
        <position position="196"/>
    </location>
    <ligand>
        <name>Zn(2+)</name>
        <dbReference type="ChEBI" id="CHEBI:29105"/>
        <label>1</label>
    </ligand>
</feature>
<feature type="binding site" evidence="1">
    <location>
        <position position="378"/>
    </location>
    <ligand>
        <name>Zn(2+)</name>
        <dbReference type="ChEBI" id="CHEBI:29105"/>
        <label>2</label>
    </ligand>
</feature>
<protein>
    <recommendedName>
        <fullName evidence="1">Peptidase T</fullName>
        <ecNumber evidence="1">3.4.11.4</ecNumber>
    </recommendedName>
    <alternativeName>
        <fullName evidence="1">Aminotripeptidase</fullName>
        <shortName evidence="1">Tripeptidase</shortName>
    </alternativeName>
    <alternativeName>
        <fullName evidence="1">Tripeptide aminopeptidase</fullName>
    </alternativeName>
</protein>